<keyword id="KW-0009">Actin-binding</keyword>
<keyword id="KW-0175">Coiled coil</keyword>
<keyword id="KW-0963">Cytoplasm</keyword>
<keyword id="KW-0206">Cytoskeleton</keyword>
<keyword id="KW-1185">Reference proteome</keyword>
<protein>
    <recommendedName>
        <fullName evidence="3">Stomatal closure-related actin-binding protein 2</fullName>
    </recommendedName>
</protein>
<evidence type="ECO:0000250" key="1">
    <source>
        <dbReference type="UniProtKB" id="O48791"/>
    </source>
</evidence>
<evidence type="ECO:0000255" key="2"/>
<evidence type="ECO:0000303" key="3">
    <source>
    </source>
</evidence>
<evidence type="ECO:0000305" key="4"/>
<evidence type="ECO:0000312" key="5">
    <source>
        <dbReference type="Araport" id="AT2G40820"/>
    </source>
</evidence>
<evidence type="ECO:0000312" key="6">
    <source>
        <dbReference type="EMBL" id="AAB86442.1"/>
    </source>
</evidence>
<evidence type="ECO:0000312" key="7">
    <source>
        <dbReference type="Proteomes" id="UP000006548"/>
    </source>
</evidence>
<comment type="function">
    <text evidence="3">Probable plant-specific actin binding protein that bundles and stabilizes microfilaments (MFs).</text>
</comment>
<comment type="subcellular location">
    <subcellularLocation>
        <location evidence="1">Cytoplasm</location>
        <location evidence="1">Cytoskeleton</location>
    </subcellularLocation>
</comment>
<comment type="tissue specificity">
    <text evidence="3">Expressed in roots, stems, leaves, siliques and flowers.</text>
</comment>
<comment type="similarity">
    <text evidence="4">Belongs to the SCAB family.</text>
</comment>
<comment type="sequence caution" evidence="4">
    <conflict type="erroneous gene model prediction">
        <sequence resource="EMBL-CDS" id="AAB86442"/>
    </conflict>
</comment>
<organism evidence="7">
    <name type="scientific">Arabidopsis thaliana</name>
    <name type="common">Mouse-ear cress</name>
    <dbReference type="NCBI Taxonomy" id="3702"/>
    <lineage>
        <taxon>Eukaryota</taxon>
        <taxon>Viridiplantae</taxon>
        <taxon>Streptophyta</taxon>
        <taxon>Embryophyta</taxon>
        <taxon>Tracheophyta</taxon>
        <taxon>Spermatophyta</taxon>
        <taxon>Magnoliopsida</taxon>
        <taxon>eudicotyledons</taxon>
        <taxon>Gunneridae</taxon>
        <taxon>Pentapetalae</taxon>
        <taxon>rosids</taxon>
        <taxon>malvids</taxon>
        <taxon>Brassicales</taxon>
        <taxon>Brassicaceae</taxon>
        <taxon>Camelineae</taxon>
        <taxon>Arabidopsis</taxon>
    </lineage>
</organism>
<feature type="chain" id="PRO_0000431808" description="Stomatal closure-related actin-binding protein 2">
    <location>
        <begin position="1"/>
        <end position="492"/>
    </location>
</feature>
<feature type="coiled-coil region" evidence="2">
    <location>
        <begin position="112"/>
        <end position="132"/>
    </location>
</feature>
<sequence>MTKVCPKTEEKRVVSEAVVEPISADVSFASNHFPTYKLGPDDQIVDEPDEDDKVPSVKDVVGKETGDLSDQHKKLSVRDLACKFDKNLAAASKLVDEAKLNDVTSLEGHVMLKKLRDALETMRGRMDGRNREAVEKAISMVEALAVKLTQNEGELIHDKFEVKKLASFLKKASDDAKKLVNQEKSFACAEIESARALVMKLGGAFEEQELCSKASRDQGPNVEKLVEEVQEARRIRRLHKPTMVIGMQHELRDLKSQIQEKSAYSVKLQREIAIIKKAEGSKSCPYVLDGAQSLGSCLRIRASSDSGIDISKCSIHWYRAASESSRREAISGANRSVYAPEPFDVGRVIQADIVSNGQKFTVTTDGPINTAAGLQSRVESLLRKSNSEFTVVISQMNGQDHASRSHVFTVGKARIKLSRGWITKAREIYSTSMQLCGVRGNANVPAKALFWQLRKGLTFLLTFESEQERNAAIVLARTYAYDCNVTLVGPDD</sequence>
<accession>F4IIZ9</accession>
<accession>O22196</accession>
<proteinExistence type="evidence at transcript level"/>
<gene>
    <name evidence="3" type="primary">SCAB2</name>
    <name evidence="5" type="ordered locus">At2g40820</name>
    <name evidence="6" type="ORF">T20B5.2</name>
</gene>
<name>SCAB2_ARATH</name>
<dbReference type="EMBL" id="AC002409">
    <property type="protein sequence ID" value="AAB86442.1"/>
    <property type="status" value="ALT_SEQ"/>
    <property type="molecule type" value="Genomic_DNA"/>
</dbReference>
<dbReference type="EMBL" id="CP002685">
    <property type="protein sequence ID" value="AEC09885.1"/>
    <property type="molecule type" value="Genomic_DNA"/>
</dbReference>
<dbReference type="EMBL" id="CP002685">
    <property type="protein sequence ID" value="ANM61778.1"/>
    <property type="molecule type" value="Genomic_DNA"/>
</dbReference>
<dbReference type="PIR" id="T00746">
    <property type="entry name" value="T00746"/>
</dbReference>
<dbReference type="RefSeq" id="NP_001323977.1">
    <property type="nucleotide sequence ID" value="NM_001336868.1"/>
</dbReference>
<dbReference type="RefSeq" id="NP_181614.7">
    <property type="nucleotide sequence ID" value="NM_129645.9"/>
</dbReference>
<dbReference type="SMR" id="F4IIZ9"/>
<dbReference type="FunCoup" id="F4IIZ9">
    <property type="interactions" value="13"/>
</dbReference>
<dbReference type="STRING" id="3702.F4IIZ9"/>
<dbReference type="iPTMnet" id="F4IIZ9"/>
<dbReference type="PaxDb" id="3702-AT2G40820.1"/>
<dbReference type="ProteomicsDB" id="232903"/>
<dbReference type="EnsemblPlants" id="AT2G40820.1">
    <property type="protein sequence ID" value="AT2G40820.1"/>
    <property type="gene ID" value="AT2G40820"/>
</dbReference>
<dbReference type="EnsemblPlants" id="AT2G40820.2">
    <property type="protein sequence ID" value="AT2G40820.2"/>
    <property type="gene ID" value="AT2G40820"/>
</dbReference>
<dbReference type="GeneID" id="818679"/>
<dbReference type="Gramene" id="AT2G40820.1">
    <property type="protein sequence ID" value="AT2G40820.1"/>
    <property type="gene ID" value="AT2G40820"/>
</dbReference>
<dbReference type="Gramene" id="AT2G40820.2">
    <property type="protein sequence ID" value="AT2G40820.2"/>
    <property type="gene ID" value="AT2G40820"/>
</dbReference>
<dbReference type="KEGG" id="ath:AT2G40820"/>
<dbReference type="Araport" id="AT2G40820"/>
<dbReference type="TAIR" id="AT2G40820"/>
<dbReference type="eggNOG" id="ENOG502QRDW">
    <property type="taxonomic scope" value="Eukaryota"/>
</dbReference>
<dbReference type="HOGENOM" id="CLU_026412_2_0_1"/>
<dbReference type="InParanoid" id="F4IIZ9"/>
<dbReference type="OrthoDB" id="2014217at2759"/>
<dbReference type="PRO" id="PR:F4IIZ9"/>
<dbReference type="Proteomes" id="UP000006548">
    <property type="component" value="Chromosome 2"/>
</dbReference>
<dbReference type="ExpressionAtlas" id="F4IIZ9">
    <property type="expression patterns" value="baseline and differential"/>
</dbReference>
<dbReference type="GO" id="GO:0005737">
    <property type="term" value="C:cytoplasm"/>
    <property type="evidence" value="ECO:0007669"/>
    <property type="project" value="UniProtKB-KW"/>
</dbReference>
<dbReference type="GO" id="GO:0005856">
    <property type="term" value="C:cytoskeleton"/>
    <property type="evidence" value="ECO:0007669"/>
    <property type="project" value="UniProtKB-SubCell"/>
</dbReference>
<dbReference type="GO" id="GO:0003779">
    <property type="term" value="F:actin binding"/>
    <property type="evidence" value="ECO:0007669"/>
    <property type="project" value="UniProtKB-KW"/>
</dbReference>
<dbReference type="GO" id="GO:0007015">
    <property type="term" value="P:actin filament organization"/>
    <property type="evidence" value="ECO:0007669"/>
    <property type="project" value="InterPro"/>
</dbReference>
<dbReference type="GO" id="GO:0010119">
    <property type="term" value="P:regulation of stomatal movement"/>
    <property type="evidence" value="ECO:0007669"/>
    <property type="project" value="InterPro"/>
</dbReference>
<dbReference type="CDD" id="cd11675">
    <property type="entry name" value="SCAB1_middle"/>
    <property type="match status" value="1"/>
</dbReference>
<dbReference type="FunFam" id="2.60.40.2700:FF:000004">
    <property type="entry name" value="Stomatal closure actin-binding-like protein"/>
    <property type="match status" value="1"/>
</dbReference>
<dbReference type="FunFam" id="2.30.29.140:FF:000001">
    <property type="entry name" value="Stomatal closure-related actin-binding protein 1"/>
    <property type="match status" value="1"/>
</dbReference>
<dbReference type="Gene3D" id="2.30.29.140">
    <property type="match status" value="1"/>
</dbReference>
<dbReference type="Gene3D" id="2.60.40.2700">
    <property type="match status" value="1"/>
</dbReference>
<dbReference type="Gene3D" id="1.20.5.440">
    <property type="entry name" value="ATP synthase delta/epsilon subunit, C-terminal domain"/>
    <property type="match status" value="1"/>
</dbReference>
<dbReference type="InterPro" id="IPR039640">
    <property type="entry name" value="SCAB"/>
</dbReference>
<dbReference type="InterPro" id="IPR032012">
    <property type="entry name" value="SCAB-ABD"/>
</dbReference>
<dbReference type="InterPro" id="IPR032015">
    <property type="entry name" value="SCAB-Ig"/>
</dbReference>
<dbReference type="InterPro" id="IPR041144">
    <property type="entry name" value="SCAB-PH"/>
</dbReference>
<dbReference type="InterPro" id="IPR032009">
    <property type="entry name" value="SCAB_CC"/>
</dbReference>
<dbReference type="PANTHER" id="PTHR31172">
    <property type="entry name" value="STOMATAL CLOSURE-RELATED ACTIN-BINDING PROTEIN 1"/>
    <property type="match status" value="1"/>
</dbReference>
<dbReference type="PANTHER" id="PTHR31172:SF13">
    <property type="entry name" value="STOMATAL CLOSURE-RELATED ACTIN-BINDING PROTEIN 2"/>
    <property type="match status" value="1"/>
</dbReference>
<dbReference type="Pfam" id="PF16711">
    <property type="entry name" value="SCAB-ABD"/>
    <property type="match status" value="1"/>
</dbReference>
<dbReference type="Pfam" id="PF16709">
    <property type="entry name" value="SCAB-Ig"/>
    <property type="match status" value="1"/>
</dbReference>
<dbReference type="Pfam" id="PF17684">
    <property type="entry name" value="SCAB-PH"/>
    <property type="match status" value="1"/>
</dbReference>
<dbReference type="Pfam" id="PF16712">
    <property type="entry name" value="SCAB_CC"/>
    <property type="match status" value="1"/>
</dbReference>
<reference key="1">
    <citation type="journal article" date="1999" name="Nature">
        <title>Sequence and analysis of chromosome 2 of the plant Arabidopsis thaliana.</title>
        <authorList>
            <person name="Lin X."/>
            <person name="Kaul S."/>
            <person name="Rounsley S.D."/>
            <person name="Shea T.P."/>
            <person name="Benito M.-I."/>
            <person name="Town C.D."/>
            <person name="Fujii C.Y."/>
            <person name="Mason T.M."/>
            <person name="Bowman C.L."/>
            <person name="Barnstead M.E."/>
            <person name="Feldblyum T.V."/>
            <person name="Buell C.R."/>
            <person name="Ketchum K.A."/>
            <person name="Lee J.J."/>
            <person name="Ronning C.M."/>
            <person name="Koo H.L."/>
            <person name="Moffat K.S."/>
            <person name="Cronin L.A."/>
            <person name="Shen M."/>
            <person name="Pai G."/>
            <person name="Van Aken S."/>
            <person name="Umayam L."/>
            <person name="Tallon L.J."/>
            <person name="Gill J.E."/>
            <person name="Adams M.D."/>
            <person name="Carrera A.J."/>
            <person name="Creasy T.H."/>
            <person name="Goodman H.M."/>
            <person name="Somerville C.R."/>
            <person name="Copenhaver G.P."/>
            <person name="Preuss D."/>
            <person name="Nierman W.C."/>
            <person name="White O."/>
            <person name="Eisen J.A."/>
            <person name="Salzberg S.L."/>
            <person name="Fraser C.M."/>
            <person name="Venter J.C."/>
        </authorList>
    </citation>
    <scope>NUCLEOTIDE SEQUENCE [LARGE SCALE GENOMIC DNA]</scope>
    <source>
        <strain>cv. Columbia</strain>
    </source>
</reference>
<reference key="2">
    <citation type="journal article" date="2017" name="Plant J.">
        <title>Araport11: a complete reannotation of the Arabidopsis thaliana reference genome.</title>
        <authorList>
            <person name="Cheng C.Y."/>
            <person name="Krishnakumar V."/>
            <person name="Chan A.P."/>
            <person name="Thibaud-Nissen F."/>
            <person name="Schobel S."/>
            <person name="Town C.D."/>
        </authorList>
    </citation>
    <scope>GENOME REANNOTATION</scope>
    <source>
        <strain>cv. Columbia</strain>
    </source>
</reference>
<reference key="3">
    <citation type="journal article" date="2011" name="Plant Cell">
        <title>The plant-specific actin binding protein SCAB1 stabilizes actin filaments and regulates stomatal movement in Arabidopsis.</title>
        <authorList>
            <person name="Zhao Y."/>
            <person name="Zhao S."/>
            <person name="Mao T."/>
            <person name="Qu X."/>
            <person name="Cao W."/>
            <person name="Zhang L."/>
            <person name="Zhang W."/>
            <person name="He L."/>
            <person name="Li S."/>
            <person name="Ren S."/>
            <person name="Zhao J."/>
            <person name="Zhu G."/>
            <person name="Huang S."/>
            <person name="Ye K."/>
            <person name="Yuan M."/>
            <person name="Guo Y."/>
        </authorList>
    </citation>
    <scope>FUNCTION</scope>
    <scope>GENE FAMILY</scope>
    <scope>TISSUE SPECIFICITY</scope>
</reference>